<proteinExistence type="evidence at transcript level"/>
<evidence type="ECO:0000250" key="1"/>
<evidence type="ECO:0000255" key="2"/>
<evidence type="ECO:0000255" key="3">
    <source>
        <dbReference type="PROSITE-ProRule" id="PRU00274"/>
    </source>
</evidence>
<evidence type="ECO:0000269" key="4">
    <source>
    </source>
</evidence>
<keyword id="KW-1015">Disulfide bond</keyword>
<keyword id="KW-0378">Hydrolase</keyword>
<keyword id="KW-0645">Protease</keyword>
<keyword id="KW-0964">Secreted</keyword>
<keyword id="KW-0720">Serine protease</keyword>
<keyword id="KW-0732">Signal</keyword>
<protein>
    <recommendedName>
        <fullName>Lectizyme</fullName>
        <ecNumber>3.4.21.-</ecNumber>
    </recommendedName>
    <alternativeName>
        <fullName>Proteolytic lectin</fullName>
    </alternativeName>
</protein>
<comment type="function">
    <text evidence="4">Protein with lectin and protease activity involved in the establishment of trypanosome infections in tsetse flies. Binds D-glucosamine and agglutinates bloodstream-form trypanosomes and rabbit red blood cells. Capable of inducing transformation of bloodstream-form trypanosomes into procyclic (midgut) forms in vitro.</text>
</comment>
<comment type="subcellular location">
    <subcellularLocation>
        <location evidence="4">Secreted</location>
    </subcellularLocation>
</comment>
<comment type="tissue specificity">
    <text evidence="4">Expressed in the midgut.</text>
</comment>
<comment type="induction">
    <text evidence="4">By blood meal.</text>
</comment>
<comment type="similarity">
    <text evidence="3">Belongs to the peptidase S1 family.</text>
</comment>
<reference key="1">
    <citation type="journal article" date="2006" name="J. Med. Entomol.">
        <title>Glossina proteolytic lectin does not require a carbohydrate moiety for enzymatic or trypanosome-transforming activities.</title>
        <authorList>
            <person name="Amin D.N."/>
            <person name="Kamita S.G."/>
            <person name="Muluvi G.M."/>
            <person name="Machuka J."/>
            <person name="Hammock B.D."/>
            <person name="Osir E.O."/>
        </authorList>
    </citation>
    <scope>NUCLEOTIDE SEQUENCE [MRNA]</scope>
    <scope>FUNCTION</scope>
    <scope>SUBCELLULAR LOCATION</scope>
    <scope>TISSUE SPECIFICITY</scope>
    <scope>INDUCTION</scope>
    <source>
        <tissue>Midgut</tissue>
    </source>
</reference>
<sequence>MKFFAVFALCVASVSAANLDAIAKPGFPAGRIINGHEAEKGEAPFIVSLKAGKGHFCGGSIIAENWVLTAGHCLIFDEFEIVAGLHSRNDESDVQIRKVTGKHQQIVHEKYGGGVGPNDIGLIYVDKPFNLNALTRDGTAAVAKVNLPTGKYESTGEGKLYGWGLDNSGFSPNILNTLDVNIIGYEECKNALNSDAPLDPVNICSYTAGAIDGACNGDSGGPMVRITPDGTELVGIVSWGYQPCASTTMPSVYTWTSAFDKWIEDSIENYAQLL</sequence>
<feature type="signal peptide" evidence="2">
    <location>
        <begin position="1"/>
        <end position="16"/>
    </location>
</feature>
<feature type="chain" id="PRO_0000291656" description="Lectizyme">
    <location>
        <begin position="17"/>
        <end position="274"/>
    </location>
</feature>
<feature type="domain" description="Peptidase S1" evidence="3">
    <location>
        <begin position="32"/>
        <end position="268"/>
    </location>
</feature>
<feature type="active site" description="Charge relay system" evidence="1">
    <location>
        <position position="72"/>
    </location>
</feature>
<feature type="active site" description="Charge relay system" evidence="1">
    <location>
        <position position="119"/>
    </location>
</feature>
<feature type="active site" description="Charge relay system" evidence="1">
    <location>
        <position position="219"/>
    </location>
</feature>
<feature type="disulfide bond" evidence="3">
    <location>
        <begin position="57"/>
        <end position="73"/>
    </location>
</feature>
<feature type="disulfide bond" evidence="3">
    <location>
        <begin position="188"/>
        <end position="204"/>
    </location>
</feature>
<feature type="disulfide bond" evidence="3">
    <location>
        <begin position="215"/>
        <end position="244"/>
    </location>
</feature>
<dbReference type="EC" id="3.4.21.-"/>
<dbReference type="EMBL" id="DQ060150">
    <property type="protein sequence ID" value="AAY59001.1"/>
    <property type="molecule type" value="mRNA"/>
</dbReference>
<dbReference type="SMR" id="Q4TTV7"/>
<dbReference type="STRING" id="7395.Q4TTV7"/>
<dbReference type="VEuPathDB" id="VectorBase:GAUT018969"/>
<dbReference type="Proteomes" id="UP000078200">
    <property type="component" value="Unassembled WGS sequence"/>
</dbReference>
<dbReference type="GO" id="GO:0005576">
    <property type="term" value="C:extracellular region"/>
    <property type="evidence" value="ECO:0007669"/>
    <property type="project" value="UniProtKB-SubCell"/>
</dbReference>
<dbReference type="GO" id="GO:0004252">
    <property type="term" value="F:serine-type endopeptidase activity"/>
    <property type="evidence" value="ECO:0007669"/>
    <property type="project" value="InterPro"/>
</dbReference>
<dbReference type="GO" id="GO:0006508">
    <property type="term" value="P:proteolysis"/>
    <property type="evidence" value="ECO:0007669"/>
    <property type="project" value="UniProtKB-KW"/>
</dbReference>
<dbReference type="CDD" id="cd00190">
    <property type="entry name" value="Tryp_SPc"/>
    <property type="match status" value="1"/>
</dbReference>
<dbReference type="FunFam" id="2.40.10.10:FF:000068">
    <property type="entry name" value="transmembrane protease serine 2"/>
    <property type="match status" value="1"/>
</dbReference>
<dbReference type="Gene3D" id="2.40.10.10">
    <property type="entry name" value="Trypsin-like serine proteases"/>
    <property type="match status" value="1"/>
</dbReference>
<dbReference type="InterPro" id="IPR050430">
    <property type="entry name" value="Peptidase_S1"/>
</dbReference>
<dbReference type="InterPro" id="IPR009003">
    <property type="entry name" value="Peptidase_S1_PA"/>
</dbReference>
<dbReference type="InterPro" id="IPR043504">
    <property type="entry name" value="Peptidase_S1_PA_chymotrypsin"/>
</dbReference>
<dbReference type="InterPro" id="IPR001314">
    <property type="entry name" value="Peptidase_S1A"/>
</dbReference>
<dbReference type="InterPro" id="IPR001254">
    <property type="entry name" value="Trypsin_dom"/>
</dbReference>
<dbReference type="InterPro" id="IPR018114">
    <property type="entry name" value="TRYPSIN_HIS"/>
</dbReference>
<dbReference type="InterPro" id="IPR033116">
    <property type="entry name" value="TRYPSIN_SER"/>
</dbReference>
<dbReference type="PANTHER" id="PTHR24276:SF95">
    <property type="entry name" value="PEPTIDASE S1 DOMAIN-CONTAINING PROTEIN"/>
    <property type="match status" value="1"/>
</dbReference>
<dbReference type="PANTHER" id="PTHR24276">
    <property type="entry name" value="POLYSERASE-RELATED"/>
    <property type="match status" value="1"/>
</dbReference>
<dbReference type="Pfam" id="PF00089">
    <property type="entry name" value="Trypsin"/>
    <property type="match status" value="1"/>
</dbReference>
<dbReference type="PRINTS" id="PR00722">
    <property type="entry name" value="CHYMOTRYPSIN"/>
</dbReference>
<dbReference type="SMART" id="SM00020">
    <property type="entry name" value="Tryp_SPc"/>
    <property type="match status" value="1"/>
</dbReference>
<dbReference type="SUPFAM" id="SSF50494">
    <property type="entry name" value="Trypsin-like serine proteases"/>
    <property type="match status" value="1"/>
</dbReference>
<dbReference type="PROSITE" id="PS50240">
    <property type="entry name" value="TRYPSIN_DOM"/>
    <property type="match status" value="1"/>
</dbReference>
<dbReference type="PROSITE" id="PS00134">
    <property type="entry name" value="TRYPSIN_HIS"/>
    <property type="match status" value="1"/>
</dbReference>
<dbReference type="PROSITE" id="PS00135">
    <property type="entry name" value="TRYPSIN_SER"/>
    <property type="match status" value="1"/>
</dbReference>
<accession>Q4TTV7</accession>
<gene>
    <name type="primary">Gpl</name>
</gene>
<name>GPL_GLOAU</name>
<organism>
    <name type="scientific">Glossina austeni</name>
    <name type="common">Savannah tsetse fly</name>
    <dbReference type="NCBI Taxonomy" id="7395"/>
    <lineage>
        <taxon>Eukaryota</taxon>
        <taxon>Metazoa</taxon>
        <taxon>Ecdysozoa</taxon>
        <taxon>Arthropoda</taxon>
        <taxon>Hexapoda</taxon>
        <taxon>Insecta</taxon>
        <taxon>Pterygota</taxon>
        <taxon>Neoptera</taxon>
        <taxon>Endopterygota</taxon>
        <taxon>Diptera</taxon>
        <taxon>Brachycera</taxon>
        <taxon>Muscomorpha</taxon>
        <taxon>Hippoboscoidea</taxon>
        <taxon>Glossinidae</taxon>
        <taxon>Glossina</taxon>
    </lineage>
</organism>